<protein>
    <recommendedName>
        <fullName evidence="1">N-(5'-phosphoribosyl)anthranilate isomerase</fullName>
        <shortName evidence="1">PRAI</shortName>
        <ecNumber evidence="1">5.3.1.24</ecNumber>
    </recommendedName>
</protein>
<organism>
    <name type="scientific">Deinococcus radiodurans (strain ATCC 13939 / DSM 20539 / JCM 16871 / CCUG 27074 / LMG 4051 / NBRC 15346 / NCIMB 9279 / VKM B-1422 / R1)</name>
    <dbReference type="NCBI Taxonomy" id="243230"/>
    <lineage>
        <taxon>Bacteria</taxon>
        <taxon>Thermotogati</taxon>
        <taxon>Deinococcota</taxon>
        <taxon>Deinococci</taxon>
        <taxon>Deinococcales</taxon>
        <taxon>Deinococcaceae</taxon>
        <taxon>Deinococcus</taxon>
    </lineage>
</organism>
<feature type="chain" id="PRO_0000154357" description="N-(5'-phosphoribosyl)anthranilate isomerase">
    <location>
        <begin position="1"/>
        <end position="208"/>
    </location>
</feature>
<name>TRPF_DEIRA</name>
<comment type="catalytic activity">
    <reaction evidence="1">
        <text>N-(5-phospho-beta-D-ribosyl)anthranilate = 1-(2-carboxyphenylamino)-1-deoxy-D-ribulose 5-phosphate</text>
        <dbReference type="Rhea" id="RHEA:21540"/>
        <dbReference type="ChEBI" id="CHEBI:18277"/>
        <dbReference type="ChEBI" id="CHEBI:58613"/>
        <dbReference type="EC" id="5.3.1.24"/>
    </reaction>
</comment>
<comment type="pathway">
    <text evidence="1">Amino-acid biosynthesis; L-tryptophan biosynthesis; L-tryptophan from chorismate: step 3/5.</text>
</comment>
<comment type="similarity">
    <text evidence="1">Belongs to the TrpF family.</text>
</comment>
<sequence>MSEGKVRVKVCGTTTLPDALHAAAAGADALGFIFAPGSKRRVTASQARGISLNVGPSVARIGVFMGQSLDEVLRTAEAARVSAVQLHGPLPGVYVAAVAGYYPVLRVLGPEELQAGNVQAATVQATPGVTLMLDAPQPGSGQPLDWAALVPHFPPGSWLAGGLGPDNVAQAIATLRPAGVDAVSRLEASPGLKNPQAVEAFIDAVKRS</sequence>
<evidence type="ECO:0000255" key="1">
    <source>
        <dbReference type="HAMAP-Rule" id="MF_00135"/>
    </source>
</evidence>
<accession>Q9RY28</accession>
<keyword id="KW-0028">Amino-acid biosynthesis</keyword>
<keyword id="KW-0057">Aromatic amino acid biosynthesis</keyword>
<keyword id="KW-0413">Isomerase</keyword>
<keyword id="KW-1185">Reference proteome</keyword>
<keyword id="KW-0822">Tryptophan biosynthesis</keyword>
<reference key="1">
    <citation type="journal article" date="1999" name="Science">
        <title>Genome sequence of the radioresistant bacterium Deinococcus radiodurans R1.</title>
        <authorList>
            <person name="White O."/>
            <person name="Eisen J.A."/>
            <person name="Heidelberg J.F."/>
            <person name="Hickey E.K."/>
            <person name="Peterson J.D."/>
            <person name="Dodson R.J."/>
            <person name="Haft D.H."/>
            <person name="Gwinn M.L."/>
            <person name="Nelson W.C."/>
            <person name="Richardson D.L."/>
            <person name="Moffat K.S."/>
            <person name="Qin H."/>
            <person name="Jiang L."/>
            <person name="Pamphile W."/>
            <person name="Crosby M."/>
            <person name="Shen M."/>
            <person name="Vamathevan J.J."/>
            <person name="Lam P."/>
            <person name="McDonald L.A."/>
            <person name="Utterback T.R."/>
            <person name="Zalewski C."/>
            <person name="Makarova K.S."/>
            <person name="Aravind L."/>
            <person name="Daly M.J."/>
            <person name="Minton K.W."/>
            <person name="Fleischmann R.D."/>
            <person name="Ketchum K.A."/>
            <person name="Nelson K.E."/>
            <person name="Salzberg S.L."/>
            <person name="Smith H.O."/>
            <person name="Venter J.C."/>
            <person name="Fraser C.M."/>
        </authorList>
    </citation>
    <scope>NUCLEOTIDE SEQUENCE [LARGE SCALE GENOMIC DNA]</scope>
    <source>
        <strain>ATCC 13939 / DSM 20539 / JCM 16871 / CCUG 27074 / LMG 4051 / NBRC 15346 / NCIMB 9279 / VKM B-1422 / R1</strain>
    </source>
</reference>
<proteinExistence type="inferred from homology"/>
<gene>
    <name evidence="1" type="primary">trpF</name>
    <name type="ordered locus">DR_0123</name>
</gene>
<dbReference type="EC" id="5.3.1.24" evidence="1"/>
<dbReference type="EMBL" id="AE000513">
    <property type="protein sequence ID" value="AAF09715.1"/>
    <property type="molecule type" value="Genomic_DNA"/>
</dbReference>
<dbReference type="PIR" id="D75556">
    <property type="entry name" value="D75556"/>
</dbReference>
<dbReference type="RefSeq" id="NP_293849.1">
    <property type="nucleotide sequence ID" value="NC_001263.1"/>
</dbReference>
<dbReference type="RefSeq" id="WP_010886771.1">
    <property type="nucleotide sequence ID" value="NC_001263.1"/>
</dbReference>
<dbReference type="SMR" id="Q9RY28"/>
<dbReference type="FunCoup" id="Q9RY28">
    <property type="interactions" value="212"/>
</dbReference>
<dbReference type="STRING" id="243230.DR_0123"/>
<dbReference type="PaxDb" id="243230-DR_0123"/>
<dbReference type="EnsemblBacteria" id="AAF09715">
    <property type="protein sequence ID" value="AAF09715"/>
    <property type="gene ID" value="DR_0123"/>
</dbReference>
<dbReference type="GeneID" id="69516352"/>
<dbReference type="KEGG" id="dra:DR_0123"/>
<dbReference type="PATRIC" id="fig|243230.17.peg.287"/>
<dbReference type="eggNOG" id="COG0135">
    <property type="taxonomic scope" value="Bacteria"/>
</dbReference>
<dbReference type="HOGENOM" id="CLU_076364_0_1_0"/>
<dbReference type="InParanoid" id="Q9RY28"/>
<dbReference type="OrthoDB" id="9786954at2"/>
<dbReference type="UniPathway" id="UPA00035">
    <property type="reaction ID" value="UER00042"/>
</dbReference>
<dbReference type="Proteomes" id="UP000002524">
    <property type="component" value="Chromosome 1"/>
</dbReference>
<dbReference type="GO" id="GO:0004640">
    <property type="term" value="F:phosphoribosylanthranilate isomerase activity"/>
    <property type="evidence" value="ECO:0000318"/>
    <property type="project" value="GO_Central"/>
</dbReference>
<dbReference type="GO" id="GO:0000162">
    <property type="term" value="P:L-tryptophan biosynthetic process"/>
    <property type="evidence" value="ECO:0000318"/>
    <property type="project" value="GO_Central"/>
</dbReference>
<dbReference type="CDD" id="cd00405">
    <property type="entry name" value="PRAI"/>
    <property type="match status" value="1"/>
</dbReference>
<dbReference type="Gene3D" id="3.20.20.70">
    <property type="entry name" value="Aldolase class I"/>
    <property type="match status" value="1"/>
</dbReference>
<dbReference type="HAMAP" id="MF_00135">
    <property type="entry name" value="PRAI"/>
    <property type="match status" value="1"/>
</dbReference>
<dbReference type="InterPro" id="IPR013785">
    <property type="entry name" value="Aldolase_TIM"/>
</dbReference>
<dbReference type="InterPro" id="IPR001240">
    <property type="entry name" value="PRAI_dom"/>
</dbReference>
<dbReference type="InterPro" id="IPR011060">
    <property type="entry name" value="RibuloseP-bd_barrel"/>
</dbReference>
<dbReference type="InterPro" id="IPR044643">
    <property type="entry name" value="TrpF_fam"/>
</dbReference>
<dbReference type="PANTHER" id="PTHR42894">
    <property type="entry name" value="N-(5'-PHOSPHORIBOSYL)ANTHRANILATE ISOMERASE"/>
    <property type="match status" value="1"/>
</dbReference>
<dbReference type="PANTHER" id="PTHR42894:SF1">
    <property type="entry name" value="N-(5'-PHOSPHORIBOSYL)ANTHRANILATE ISOMERASE"/>
    <property type="match status" value="1"/>
</dbReference>
<dbReference type="Pfam" id="PF00697">
    <property type="entry name" value="PRAI"/>
    <property type="match status" value="1"/>
</dbReference>
<dbReference type="SUPFAM" id="SSF51366">
    <property type="entry name" value="Ribulose-phoshate binding barrel"/>
    <property type="match status" value="1"/>
</dbReference>